<accession>P84025</accession>
<accession>O09064</accession>
<accession>O09144</accession>
<accession>O14510</accession>
<accession>O35273</accession>
<accession>Q92940</accession>
<accession>Q93002</accession>
<accession>Q9GKR4</accession>
<name>SMAD3_RAT</name>
<comment type="function">
    <text evidence="2 10">Receptor-regulated SMAD (R-SMAD) that is an intracellular signal transducer and transcriptional modulator activated by TGF-beta (transforming growth factor) and activin type 1 receptor kinases. Binds the TRE element in the promoter region of many genes that are regulated by TGF-beta and, on formation of the SMAD3/SMAD4 complex, activates transcription. Also can form a SMAD3/SMAD4/JUN/FOS complex at the AP-1/SMAD site to regulate TGF-beta-mediated transcription. Has an inhibitory effect on wound healing probably by modulating both growth and migration of primary keratinocytes and by altering the TGF-mediated chemotaxis of monocytes. This effect on wound healing appears to be hormone-sensitive. Regulator of chondrogenesis and osteogenesis and inhibits early healing of bone fractures. Positively regulates PDPK1 kinase activity by stimulating its dissociation from the 14-3-3 protein YWHAQ which acts as a negative regulator (By similarity).</text>
</comment>
<comment type="subunit">
    <text evidence="2 3 7 8">Monomer; in the absence of TGF-beta (By similarity). Homooligomer; in the presence of TGF-beta (By similarity). Heterotrimer; forms a heterotrimer in the presence of TGF-beta consisting of two molecules of C-terminally phosphorylated SMAD2 or SMAD3 and one of SMAD4 to form the transcriptionally active SMAD2/SMAD3-SMAD4 complex (By similarity). Part of a complex consisting of MAGI2/ARIP1, ACVR2A, ACVR1B and SMAD3 (By similarity). Forms a complex with SMAD2 and TRIM33 upon addition of TGF-beta (By similarity). Found in a complex composed of SMAD3, RAN and XPO4; within the complex interacts directly with XPO4 (By similarity). Component of the multimeric complex SMAD3/SMAD4/JUN/FOS which forms at the AP1 promoter site; required for synergistic transcriptional activity in response to TGF-beta (By similarity). Part of a ternary complex composed of SMAD3, ITCH/AIP4 and NEDD9/HEF1; within the complex NEDD9/HEF1 interacts (via N-terminus) with ITCH/AIP4; the complex mediates ubiquitination and proteasomal degradation of NEDD9/HEF1 (By similarity). Interacts with NEDD9; the interaction promotes NEDD9 ubiquitination and proteasomal degradation (By similarity). Interacts (via an N-terminal domain) with JUN (via its basic DNA binding and leucine zipper domains); this interaction is essential for DNA binding and cooperative transcriptional activity in response to TGF-beta (By similarity). Identified in a complex that contains at least ZNF451, SMAD2, SMAD3 and SMAD4 (By similarity). Interacts with PPM1A; the interaction dephosphorylates SMAD3 in the C-terminal SXS motif leading to disruption of the SMAD2/3-SMAD4 complex, nuclear export and termination of TGF-beta signaling (By similarity). Interacts (via MH2 domain) with ZMIZ1 (via SP-RING-type domain); in the TGF-beta signaling pathway increases the activity of the SMAD3/SMAD4 transcriptional complex (By similarity). Interacts (when phosphorylated) with RNF111; RNF111 acts as an enhancer of the transcriptional responses by mediating ubiquitination and degradation of SMAD3 inhibitors (By similarity). Interacts (dephosphorylated form via the MH1 and MH2 domains) with RANBP3 (via its C-terminal R domain); the interaction results in the export of dephosphorylated SMAD3 out of the nucleus and termination of the TGF-beta signaling (By similarity). Interacts (via MH2 domain) with LEMD3; the interaction represses SMAD3 transcriptional activity through preventing the formation of the heteromeric complex with SMAD4 and translocation to the nucleus (By similarity). Interacts (via the linker region) with EP300 (C-terminal); the interaction promotes SMAD3 acetylation and is enhanced by TGF-beta phosphorylation in the C-terminal of SMAD3 (By similarity). This interaction can be blocked by competitive binding of adenovirus oncoprotein E1A to the same C-terminal site on EP300, which then results in partially inhibited SMAD3/SMAD4 transcriptional activity (By similarity). Interacts with TGFBR1 (By similarity). Interacts with TGFB1I1 (By similarity). Interacts with PRDM16 (By similarity). Interacts with SNW1 (By similarity). Interacts (via MH2 domain) with ZFYVE9 (By similarity). Interacts with HDAC1 (By similarity). Interacts with TGIF2 (By similarity). Interacts with SKOR1 (By similarity). Interacts with SKOR2 (By similarity). Interacts with DACH1; the interaction inhibits the TGF-beta signaling (By similarity). Interacts with RBPMS (By similarity). Interacts (via MH2 domain) with MECOM (By similarity). Interacts with WWTR1 (via its coiled-coil domain) (By similarity). Interacts with SKI; the interaction represses SMAD3 transcriptional activity (By similarity). Interacts with MEN1 (PubMed:11274402). Interacts with IL1F7 (By similarity). Interaction with CSNK1G2 (By similarity). Interacts with PDPK1 (via PH domain) (By similarity). Interacts with DAB2; the interactions are enhanced upon TGF-beta stimulation (By similarity). Interacts with USP15 (By similarity). Interacts with PPP5C; the interaction decreases SMAD3 phosphorylation and protein levels (By similarity). Interacts with LDLRAD4 (via the SMAD interaction motif) (By similarity). Interacts with PMEPA1 (By similarity). Interacts with ZNF451 (By similarity). Interacts with ZFHX3 (By similarity). Interacts weakly with ZNF8 (By similarity). Interacts with STUB1, HSPA1A, HSPA1B, HSP90AA1 and HSP90AB1 (By similarity). Interacts with YAP1 (when phosphorylated at 'Ser-112') (By similarity). Interacts with MAGI2/ARIP1 (By similarity). Interacts (via MH2 domain) with CITED2 (via C-terminus) (PubMed:16619037). Interacts with HGS (By similarity). Interacts with WWP1 (By similarity). Interacts with TTRAP (By similarity). Interacts with FOXL2 (By similarity). Interacts with PML (By similarity). Interacts with NEDD4L; the interaction requires TGF-beta stimulation (By similarity). Interacts with ZC3H3 (By similarity). Interacts with TGIF. Interacts with CREBBP. Interacts with ATF2. Interacts with NEDD9; the interaction is inhibited by oxidation of NEDD9 (By similarity). Interacts with MTMR4; negatively regulates TGF-beta signaling through SMAD3 dephosphorylation and retention in endosomes (By similarity).</text>
</comment>
<comment type="interaction">
    <interactant intactId="EBI-7201857">
        <id>P84025</id>
    </interactant>
    <interactant intactId="EBI-7204362">
        <id>P47196</id>
        <label>Akt1</label>
    </interactant>
    <organismsDiffer>false</organismsDiffer>
    <experiments>4</experiments>
</comment>
<comment type="interaction">
    <interactant intactId="EBI-7201857">
        <id>P84025</id>
    </interactant>
    <interactant intactId="EBI-7602718">
        <id>P59595</id>
        <label>N</label>
    </interactant>
    <organismsDiffer>true</organismsDiffer>
    <experiments>4</experiments>
</comment>
<comment type="subcellular location">
    <subcellularLocation>
        <location evidence="2">Cytoplasm</location>
    </subcellularLocation>
    <subcellularLocation>
        <location evidence="10">Nucleus</location>
    </subcellularLocation>
    <text evidence="2 3">Cytoplasmic and nuclear in the absence of TGF-beta (By similarity). On TGF-beta stimulation, migrates to the nucleus when complexed with SMAD4 (By similarity). Through the action of the phosphatase PPM1A, released from the SMAD2/SMAD4 complex, and exported out of the nucleus by interaction with RANBP1 (By similarity). Co-localizes with LEMD3 at the nucleus inner membrane. MAPK-mediated phosphorylation appears to have no effect on nuclear import (By similarity). PDPK1 prevents its nuclear translocation in response to TGF-beta (By similarity). Localized mainly to the nucleus in the early stages of embryo development with expression becoming evident in the cytoplasm of the inner cell mass at the blastocyst stage (By similarity).</text>
</comment>
<comment type="tissue specificity">
    <text evidence="9 10">Expressed in the brain (PubMed:8917532). Expressed in cardiomyocytes (PubMed:21791611).</text>
</comment>
<comment type="domain">
    <text evidence="1">The MH1 domain is required for DNA binding (By similarity). Also binds zinc ions which are necessary for the DNA binding.</text>
</comment>
<comment type="domain">
    <text evidence="1">The MH2 domain is required for both homomeric and heteromeric interactions and for transcriptional regulation. Sufficient for nuclear import (By similarity).</text>
</comment>
<comment type="domain">
    <text evidence="1">The linker region is required for the TGFbeta-mediated transcriptional activity and acts synergistically with the MH2 domain.</text>
</comment>
<comment type="PTM">
    <text evidence="2">Phosphorylated on serine and threonine residues. Enhanced phosphorylation in the linker region on Thr-179, Ser-204 and Ser-208 on EGF and TGF-beta treatment. Ser-208 is the main site of MAPK-mediated phosphorylation. CDK-mediated phosphorylation occurs in a cell-cycle dependent manner and inhibits both the transcriptional activity and antiproliferative functions of SMAD3. This phosphorylation is inhibited by flavopiridol. Maximum phosphorylation at the G(1)/S junction. Also phosphorylated on serine residues in the C-terminal SXS motif by TGFBR1 and ACVR1. TGFBR1-mediated phosphorylation at these C-terminal sites is required for interaction with SMAD4, nuclear location and transactivational activity, and appears to be a prerequisite for the TGF-beta mediated phosphorylation in the linker region. Dephosphorylated in the C-terminal SXS motif by PPM1A. This dephosphorylation disrupts the interaction with SMAD4, promotes nuclear export and terminates TGF-beta-mediated signaling. Phosphorylation at Ser-418 by CSNK1G2/CK1 promotes ligand-dependent ubiquitination and subsequent proteasome degradation, thus inhibiting SMAD3-mediated TGF-beta responses. Phosphorylated by PDPK1 (By similarity).</text>
</comment>
<comment type="PTM">
    <text evidence="2">Acetylation in the nucleus by EP300 in the MH2 domain regulates positively its transcriptional activity and is enhanced by TGF-beta.</text>
</comment>
<comment type="PTM">
    <text evidence="2 3">Ubiquitinated. Monoubiquitinated, leading to prevent DNA-binding. Deubiquitination by USP15 alleviates inhibition and promotes activation of TGF-beta target genes. Ubiquitinated by RNF111, leading to its degradation: only SMAD3 proteins, that are 'in use' are targeted by RNF111, RNF111 playing a key role in activating SMAD3 and regulating its turnover. Undergoes STUB1-mediated ubiquitination and degradation.</text>
</comment>
<comment type="PTM">
    <text evidence="2">Poly-ADP-ribosylated by PARP1 and PARP2. ADP-ribosylation negatively regulates SMAD3 transcriptional responses during the course of TGF-beta signaling.</text>
</comment>
<comment type="similarity">
    <text evidence="11">Belongs to the dwarfin/SMAD family.</text>
</comment>
<gene>
    <name type="primary">Smad3</name>
    <name type="synonym">Madh3</name>
</gene>
<protein>
    <recommendedName>
        <fullName>Mothers against decapentaplegic homolog 3</fullName>
        <shortName>MAD homolog 3</shortName>
        <shortName>Mad3</shortName>
        <shortName>Mothers against DPP homolog 3</shortName>
    </recommendedName>
    <alternativeName>
        <fullName>SMAD family member 3</fullName>
        <shortName>SMAD 3</shortName>
        <shortName>Smad3</shortName>
    </alternativeName>
</protein>
<sequence>MSSILPFTPPIVKRLLGWKKGEQNGQEEKWCEKAVKSLVKKLKKTGQLDELEKAITTQNVNTKCITIPRSLDGRLQVSHRKGLPHVIYCRLWRWPDLHSHHELRAMELCEFAFNMKKDEVCVNPYHYQRVETPVLPPVLVPRHTEIPAEFPPLDDYSHSIPENTNFPAGIEPQSNIPETPPPGYLSEDGETSDHQMNHSMDAGSPNLSPNPMSPAHNNLDLQPVTYCEPAFWCSISYYELNQRVGETFHASQPSMTVDGFTDPSNSERFCLGLLSNVNRNAAVELTRRHIGRGVRLYYIGGEVFAECLSDSAIFVQSPNCNQRYGWHPATVCKIPPGCNLKIFNNQEFAALLAQSVNQGFEAVYQLTRMCTIRMSFVKGWGAEYRRQTVTSTPCWIELHLNGPLQWLDKVLTQMGSPSIRCSSVS</sequence>
<dbReference type="EMBL" id="U66479">
    <property type="protein sequence ID" value="AAC52944.1"/>
    <property type="molecule type" value="mRNA"/>
</dbReference>
<dbReference type="EMBL" id="BC064437">
    <property type="protein sequence ID" value="AAH64437.1"/>
    <property type="molecule type" value="mRNA"/>
</dbReference>
<dbReference type="RefSeq" id="NP_037227.1">
    <property type="nucleotide sequence ID" value="NM_013095.3"/>
</dbReference>
<dbReference type="SMR" id="P84025"/>
<dbReference type="BioGRID" id="247660">
    <property type="interactions" value="3"/>
</dbReference>
<dbReference type="CORUM" id="P84025"/>
<dbReference type="FunCoup" id="P84025">
    <property type="interactions" value="3293"/>
</dbReference>
<dbReference type="IntAct" id="P84025">
    <property type="interactions" value="2"/>
</dbReference>
<dbReference type="MINT" id="P84025"/>
<dbReference type="STRING" id="10116.ENSRNOP00000037346"/>
<dbReference type="ChEMBL" id="CHEMBL3784913"/>
<dbReference type="iPTMnet" id="P84025"/>
<dbReference type="PhosphoSitePlus" id="P84025"/>
<dbReference type="jPOST" id="P84025"/>
<dbReference type="PaxDb" id="10116-ENSRNOP00000037346"/>
<dbReference type="Ensembl" id="ENSRNOT00000039730.5">
    <property type="protein sequence ID" value="ENSRNOP00000037346.3"/>
    <property type="gene ID" value="ENSRNOG00000008620.6"/>
</dbReference>
<dbReference type="GeneID" id="25631"/>
<dbReference type="KEGG" id="rno:25631"/>
<dbReference type="UCSC" id="RGD:3032">
    <property type="organism name" value="rat"/>
</dbReference>
<dbReference type="AGR" id="RGD:3032"/>
<dbReference type="CTD" id="4088"/>
<dbReference type="RGD" id="3032">
    <property type="gene designation" value="Smad3"/>
</dbReference>
<dbReference type="eggNOG" id="KOG3701">
    <property type="taxonomic scope" value="Eukaryota"/>
</dbReference>
<dbReference type="GeneTree" id="ENSGT00940000153499"/>
<dbReference type="HOGENOM" id="CLU_026736_0_0_1"/>
<dbReference type="InParanoid" id="P84025"/>
<dbReference type="OMA" id="VENCRYS"/>
<dbReference type="OrthoDB" id="5794312at2759"/>
<dbReference type="PhylomeDB" id="P84025"/>
<dbReference type="TreeFam" id="TF314923"/>
<dbReference type="Reactome" id="R-RNO-1181150">
    <property type="pathway name" value="Signaling by NODAL"/>
</dbReference>
<dbReference type="Reactome" id="R-RNO-1502540">
    <property type="pathway name" value="Signaling by Activin"/>
</dbReference>
<dbReference type="Reactome" id="R-RNO-2173788">
    <property type="pathway name" value="Downregulation of TGF-beta receptor signaling"/>
</dbReference>
<dbReference type="Reactome" id="R-RNO-2173789">
    <property type="pathway name" value="TGF-beta receptor signaling activates SMADs"/>
</dbReference>
<dbReference type="Reactome" id="R-RNO-2173795">
    <property type="pathway name" value="Downregulation of SMAD2/3:SMAD4 transcriptional activity"/>
</dbReference>
<dbReference type="Reactome" id="R-RNO-2173796">
    <property type="pathway name" value="SMAD2/SMAD3:SMAD4 heterotrimer regulates transcription"/>
</dbReference>
<dbReference type="Reactome" id="R-RNO-5689880">
    <property type="pathway name" value="Ub-specific processing proteases"/>
</dbReference>
<dbReference type="Reactome" id="R-RNO-8941855">
    <property type="pathway name" value="RUNX3 regulates CDKN1A transcription"/>
</dbReference>
<dbReference type="Reactome" id="R-RNO-9617828">
    <property type="pathway name" value="FOXO-mediated transcription of cell cycle genes"/>
</dbReference>
<dbReference type="PRO" id="PR:P84025"/>
<dbReference type="Proteomes" id="UP000002494">
    <property type="component" value="Chromosome 8"/>
</dbReference>
<dbReference type="Bgee" id="ENSRNOG00000008620">
    <property type="expression patterns" value="Expressed in skeletal muscle tissue and 19 other cell types or tissues"/>
</dbReference>
<dbReference type="GO" id="GO:0000785">
    <property type="term" value="C:chromatin"/>
    <property type="evidence" value="ECO:0000266"/>
    <property type="project" value="RGD"/>
</dbReference>
<dbReference type="GO" id="GO:0036064">
    <property type="term" value="C:ciliary basal body"/>
    <property type="evidence" value="ECO:0007669"/>
    <property type="project" value="Ensembl"/>
</dbReference>
<dbReference type="GO" id="GO:0005737">
    <property type="term" value="C:cytoplasm"/>
    <property type="evidence" value="ECO:0000266"/>
    <property type="project" value="RGD"/>
</dbReference>
<dbReference type="GO" id="GO:0005829">
    <property type="term" value="C:cytosol"/>
    <property type="evidence" value="ECO:0000266"/>
    <property type="project" value="RGD"/>
</dbReference>
<dbReference type="GO" id="GO:0071144">
    <property type="term" value="C:heteromeric SMAD protein complex"/>
    <property type="evidence" value="ECO:0000266"/>
    <property type="project" value="RGD"/>
</dbReference>
<dbReference type="GO" id="GO:0005637">
    <property type="term" value="C:nuclear inner membrane"/>
    <property type="evidence" value="ECO:0000266"/>
    <property type="project" value="RGD"/>
</dbReference>
<dbReference type="GO" id="GO:0005654">
    <property type="term" value="C:nucleoplasm"/>
    <property type="evidence" value="ECO:0007669"/>
    <property type="project" value="Ensembl"/>
</dbReference>
<dbReference type="GO" id="GO:0005634">
    <property type="term" value="C:nucleus"/>
    <property type="evidence" value="ECO:0000314"/>
    <property type="project" value="CACAO"/>
</dbReference>
<dbReference type="GO" id="GO:0005886">
    <property type="term" value="C:plasma membrane"/>
    <property type="evidence" value="ECO:0000266"/>
    <property type="project" value="RGD"/>
</dbReference>
<dbReference type="GO" id="GO:0043235">
    <property type="term" value="C:receptor complex"/>
    <property type="evidence" value="ECO:0000266"/>
    <property type="project" value="RGD"/>
</dbReference>
<dbReference type="GO" id="GO:0071141">
    <property type="term" value="C:SMAD protein complex"/>
    <property type="evidence" value="ECO:0000250"/>
    <property type="project" value="UniProtKB"/>
</dbReference>
<dbReference type="GO" id="GO:0005667">
    <property type="term" value="C:transcription regulator complex"/>
    <property type="evidence" value="ECO:0000314"/>
    <property type="project" value="RGD"/>
</dbReference>
<dbReference type="GO" id="GO:0008013">
    <property type="term" value="F:beta-catenin binding"/>
    <property type="evidence" value="ECO:0000314"/>
    <property type="project" value="BHF-UCL"/>
</dbReference>
<dbReference type="GO" id="GO:0043425">
    <property type="term" value="F:bHLH transcription factor binding"/>
    <property type="evidence" value="ECO:0000266"/>
    <property type="project" value="RGD"/>
</dbReference>
<dbReference type="GO" id="GO:0003682">
    <property type="term" value="F:chromatin binding"/>
    <property type="evidence" value="ECO:0000266"/>
    <property type="project" value="RGD"/>
</dbReference>
<dbReference type="GO" id="GO:0031490">
    <property type="term" value="F:chromatin DNA binding"/>
    <property type="evidence" value="ECO:0000266"/>
    <property type="project" value="RGD"/>
</dbReference>
<dbReference type="GO" id="GO:0000987">
    <property type="term" value="F:cis-regulatory region sequence-specific DNA binding"/>
    <property type="evidence" value="ECO:0000250"/>
    <property type="project" value="UniProtKB"/>
</dbReference>
<dbReference type="GO" id="GO:0070410">
    <property type="term" value="F:co-SMAD binding"/>
    <property type="evidence" value="ECO:0000266"/>
    <property type="project" value="RGD"/>
</dbReference>
<dbReference type="GO" id="GO:0005518">
    <property type="term" value="F:collagen binding"/>
    <property type="evidence" value="ECO:0000266"/>
    <property type="project" value="RGD"/>
</dbReference>
<dbReference type="GO" id="GO:0017151">
    <property type="term" value="F:DEAD/H-box RNA helicase binding"/>
    <property type="evidence" value="ECO:0000266"/>
    <property type="project" value="RGD"/>
</dbReference>
<dbReference type="GO" id="GO:0003677">
    <property type="term" value="F:DNA binding"/>
    <property type="evidence" value="ECO:0000266"/>
    <property type="project" value="RGD"/>
</dbReference>
<dbReference type="GO" id="GO:0001228">
    <property type="term" value="F:DNA-binding transcription activator activity, RNA polymerase II-specific"/>
    <property type="evidence" value="ECO:0000266"/>
    <property type="project" value="RGD"/>
</dbReference>
<dbReference type="GO" id="GO:0003700">
    <property type="term" value="F:DNA-binding transcription factor activity"/>
    <property type="evidence" value="ECO:0000314"/>
    <property type="project" value="RGD"/>
</dbReference>
<dbReference type="GO" id="GO:0000981">
    <property type="term" value="F:DNA-binding transcription factor activity, RNA polymerase II-specific"/>
    <property type="evidence" value="ECO:0000266"/>
    <property type="project" value="RGD"/>
</dbReference>
<dbReference type="GO" id="GO:0140297">
    <property type="term" value="F:DNA-binding transcription factor binding"/>
    <property type="evidence" value="ECO:0000266"/>
    <property type="project" value="RGD"/>
</dbReference>
<dbReference type="GO" id="GO:0001217">
    <property type="term" value="F:DNA-binding transcription repressor activity"/>
    <property type="evidence" value="ECO:0000266"/>
    <property type="project" value="RGD"/>
</dbReference>
<dbReference type="GO" id="GO:0003690">
    <property type="term" value="F:double-stranded DNA binding"/>
    <property type="evidence" value="ECO:0000266"/>
    <property type="project" value="RGD"/>
</dbReference>
<dbReference type="GO" id="GO:0019899">
    <property type="term" value="F:enzyme binding"/>
    <property type="evidence" value="ECO:0000353"/>
    <property type="project" value="BHF-UCL"/>
</dbReference>
<dbReference type="GO" id="GO:0070411">
    <property type="term" value="F:I-SMAD binding"/>
    <property type="evidence" value="ECO:0000318"/>
    <property type="project" value="GO_Central"/>
</dbReference>
<dbReference type="GO" id="GO:0042802">
    <property type="term" value="F:identical protein binding"/>
    <property type="evidence" value="ECO:0000266"/>
    <property type="project" value="RGD"/>
</dbReference>
<dbReference type="GO" id="GO:0035259">
    <property type="term" value="F:nuclear glucocorticoid receptor binding"/>
    <property type="evidence" value="ECO:0000266"/>
    <property type="project" value="RGD"/>
</dbReference>
<dbReference type="GO" id="GO:0031962">
    <property type="term" value="F:nuclear mineralocorticoid receptor binding"/>
    <property type="evidence" value="ECO:0000266"/>
    <property type="project" value="RGD"/>
</dbReference>
<dbReference type="GO" id="GO:0016922">
    <property type="term" value="F:nuclear receptor binding"/>
    <property type="evidence" value="ECO:0000266"/>
    <property type="project" value="RGD"/>
</dbReference>
<dbReference type="GO" id="GO:0019902">
    <property type="term" value="F:phosphatase binding"/>
    <property type="evidence" value="ECO:0000266"/>
    <property type="project" value="RGD"/>
</dbReference>
<dbReference type="GO" id="GO:1990841">
    <property type="term" value="F:promoter-specific chromatin binding"/>
    <property type="evidence" value="ECO:0000266"/>
    <property type="project" value="RGD"/>
</dbReference>
<dbReference type="GO" id="GO:0042803">
    <property type="term" value="F:protein homodimerization activity"/>
    <property type="evidence" value="ECO:0000266"/>
    <property type="project" value="RGD"/>
</dbReference>
<dbReference type="GO" id="GO:0019901">
    <property type="term" value="F:protein kinase binding"/>
    <property type="evidence" value="ECO:0000266"/>
    <property type="project" value="RGD"/>
</dbReference>
<dbReference type="GO" id="GO:0070412">
    <property type="term" value="F:R-SMAD binding"/>
    <property type="evidence" value="ECO:0000266"/>
    <property type="project" value="RGD"/>
</dbReference>
<dbReference type="GO" id="GO:0000978">
    <property type="term" value="F:RNA polymerase II cis-regulatory region sequence-specific DNA binding"/>
    <property type="evidence" value="ECO:0000266"/>
    <property type="project" value="RGD"/>
</dbReference>
<dbReference type="GO" id="GO:0000977">
    <property type="term" value="F:RNA polymerase II transcription regulatory region sequence-specific DNA binding"/>
    <property type="evidence" value="ECO:0000314"/>
    <property type="project" value="BHF-UCL"/>
</dbReference>
<dbReference type="GO" id="GO:0061629">
    <property type="term" value="F:RNA polymerase II-specific DNA-binding transcription factor binding"/>
    <property type="evidence" value="ECO:0000266"/>
    <property type="project" value="RGD"/>
</dbReference>
<dbReference type="GO" id="GO:0043565">
    <property type="term" value="F:sequence-specific DNA binding"/>
    <property type="evidence" value="ECO:0000314"/>
    <property type="project" value="RGD"/>
</dbReference>
<dbReference type="GO" id="GO:0032810">
    <property type="term" value="F:sterol response element binding"/>
    <property type="evidence" value="ECO:0000266"/>
    <property type="project" value="RGD"/>
</dbReference>
<dbReference type="GO" id="GO:0000976">
    <property type="term" value="F:transcription cis-regulatory region binding"/>
    <property type="evidence" value="ECO:0000266"/>
    <property type="project" value="RGD"/>
</dbReference>
<dbReference type="GO" id="GO:0001223">
    <property type="term" value="F:transcription coactivator binding"/>
    <property type="evidence" value="ECO:0000266"/>
    <property type="project" value="RGD"/>
</dbReference>
<dbReference type="GO" id="GO:0001222">
    <property type="term" value="F:transcription corepressor binding"/>
    <property type="evidence" value="ECO:0000266"/>
    <property type="project" value="RGD"/>
</dbReference>
<dbReference type="GO" id="GO:0005160">
    <property type="term" value="F:transforming growth factor beta receptor binding"/>
    <property type="evidence" value="ECO:0000266"/>
    <property type="project" value="RGD"/>
</dbReference>
<dbReference type="GO" id="GO:0043130">
    <property type="term" value="F:ubiquitin binding"/>
    <property type="evidence" value="ECO:0000266"/>
    <property type="project" value="RGD"/>
</dbReference>
<dbReference type="GO" id="GO:0031625">
    <property type="term" value="F:ubiquitin protein ligase binding"/>
    <property type="evidence" value="ECO:0000266"/>
    <property type="project" value="RGD"/>
</dbReference>
<dbReference type="GO" id="GO:0008270">
    <property type="term" value="F:zinc ion binding"/>
    <property type="evidence" value="ECO:0000266"/>
    <property type="project" value="RGD"/>
</dbReference>
<dbReference type="GO" id="GO:0032924">
    <property type="term" value="P:activin receptor signaling pathway"/>
    <property type="evidence" value="ECO:0000266"/>
    <property type="project" value="RGD"/>
</dbReference>
<dbReference type="GO" id="GO:0030325">
    <property type="term" value="P:adrenal gland development"/>
    <property type="evidence" value="ECO:0000314"/>
    <property type="project" value="RGD"/>
</dbReference>
<dbReference type="GO" id="GO:0009653">
    <property type="term" value="P:anatomical structure morphogenesis"/>
    <property type="evidence" value="ECO:0000318"/>
    <property type="project" value="GO_Central"/>
</dbReference>
<dbReference type="GO" id="GO:0006915">
    <property type="term" value="P:apoptotic process"/>
    <property type="evidence" value="ECO:0000266"/>
    <property type="project" value="RGD"/>
</dbReference>
<dbReference type="GO" id="GO:0097190">
    <property type="term" value="P:apoptotic signaling pathway"/>
    <property type="evidence" value="ECO:0000266"/>
    <property type="project" value="RGD"/>
</dbReference>
<dbReference type="GO" id="GO:0030154">
    <property type="term" value="P:cell differentiation"/>
    <property type="evidence" value="ECO:0000318"/>
    <property type="project" value="GO_Central"/>
</dbReference>
<dbReference type="GO" id="GO:0008283">
    <property type="term" value="P:cell population proliferation"/>
    <property type="evidence" value="ECO:0000266"/>
    <property type="project" value="RGD"/>
</dbReference>
<dbReference type="GO" id="GO:0045216">
    <property type="term" value="P:cell-cell junction organization"/>
    <property type="evidence" value="ECO:0000266"/>
    <property type="project" value="RGD"/>
</dbReference>
<dbReference type="GO" id="GO:0071333">
    <property type="term" value="P:cellular response to glucose stimulus"/>
    <property type="evidence" value="ECO:0000270"/>
    <property type="project" value="RGD"/>
</dbReference>
<dbReference type="GO" id="GO:0071560">
    <property type="term" value="P:cellular response to transforming growth factor beta stimulus"/>
    <property type="evidence" value="ECO:0000270"/>
    <property type="project" value="RGD"/>
</dbReference>
<dbReference type="GO" id="GO:0098586">
    <property type="term" value="P:cellular response to virus"/>
    <property type="evidence" value="ECO:0000266"/>
    <property type="project" value="RGD"/>
</dbReference>
<dbReference type="GO" id="GO:0048589">
    <property type="term" value="P:developmental growth"/>
    <property type="evidence" value="ECO:0000266"/>
    <property type="project" value="RGD"/>
</dbReference>
<dbReference type="GO" id="GO:0048701">
    <property type="term" value="P:embryonic cranial skeleton morphogenesis"/>
    <property type="evidence" value="ECO:0000266"/>
    <property type="project" value="RGD"/>
</dbReference>
<dbReference type="GO" id="GO:0048617">
    <property type="term" value="P:embryonic foregut morphogenesis"/>
    <property type="evidence" value="ECO:0000266"/>
    <property type="project" value="RGD"/>
</dbReference>
<dbReference type="GO" id="GO:0009880">
    <property type="term" value="P:embryonic pattern specification"/>
    <property type="evidence" value="ECO:0000266"/>
    <property type="project" value="RGD"/>
</dbReference>
<dbReference type="GO" id="GO:0007492">
    <property type="term" value="P:endoderm development"/>
    <property type="evidence" value="ECO:0000266"/>
    <property type="project" value="RGD"/>
</dbReference>
<dbReference type="GO" id="GO:0097191">
    <property type="term" value="P:extrinsic apoptotic signaling pathway"/>
    <property type="evidence" value="ECO:0000315"/>
    <property type="project" value="RGD"/>
</dbReference>
<dbReference type="GO" id="GO:0007369">
    <property type="term" value="P:gastrulation"/>
    <property type="evidence" value="ECO:0000266"/>
    <property type="project" value="RGD"/>
</dbReference>
<dbReference type="GO" id="GO:0001947">
    <property type="term" value="P:heart looping"/>
    <property type="evidence" value="ECO:0000266"/>
    <property type="project" value="RGD"/>
</dbReference>
<dbReference type="GO" id="GO:0006955">
    <property type="term" value="P:immune response"/>
    <property type="evidence" value="ECO:0000266"/>
    <property type="project" value="RGD"/>
</dbReference>
<dbReference type="GO" id="GO:0002520">
    <property type="term" value="P:immune system development"/>
    <property type="evidence" value="ECO:0000266"/>
    <property type="project" value="RGD"/>
</dbReference>
<dbReference type="GO" id="GO:0001701">
    <property type="term" value="P:in utero embryonic development"/>
    <property type="evidence" value="ECO:0000266"/>
    <property type="project" value="RGD"/>
</dbReference>
<dbReference type="GO" id="GO:0007254">
    <property type="term" value="P:JNK cascade"/>
    <property type="evidence" value="ECO:0000266"/>
    <property type="project" value="RGD"/>
</dbReference>
<dbReference type="GO" id="GO:0070306">
    <property type="term" value="P:lens fiber cell differentiation"/>
    <property type="evidence" value="ECO:0000266"/>
    <property type="project" value="RGD"/>
</dbReference>
<dbReference type="GO" id="GO:0001889">
    <property type="term" value="P:liver development"/>
    <property type="evidence" value="ECO:0000266"/>
    <property type="project" value="RGD"/>
</dbReference>
<dbReference type="GO" id="GO:0000165">
    <property type="term" value="P:MAPK cascade"/>
    <property type="evidence" value="ECO:0000266"/>
    <property type="project" value="RGD"/>
</dbReference>
<dbReference type="GO" id="GO:0001707">
    <property type="term" value="P:mesoderm formation"/>
    <property type="evidence" value="ECO:0000266"/>
    <property type="project" value="RGD"/>
</dbReference>
<dbReference type="GO" id="GO:0043066">
    <property type="term" value="P:negative regulation of apoptotic process"/>
    <property type="evidence" value="ECO:0000314"/>
    <property type="project" value="RGD"/>
</dbReference>
<dbReference type="GO" id="GO:1903243">
    <property type="term" value="P:negative regulation of cardiac muscle hypertrophy in response to stress"/>
    <property type="evidence" value="ECO:0000316"/>
    <property type="project" value="BHF-UCL"/>
</dbReference>
<dbReference type="GO" id="GO:0030308">
    <property type="term" value="P:negative regulation of cell growth"/>
    <property type="evidence" value="ECO:0000266"/>
    <property type="project" value="RGD"/>
</dbReference>
<dbReference type="GO" id="GO:0008285">
    <property type="term" value="P:negative regulation of cell population proliferation"/>
    <property type="evidence" value="ECO:0000314"/>
    <property type="project" value="RGD"/>
</dbReference>
<dbReference type="GO" id="GO:0051481">
    <property type="term" value="P:negative regulation of cytosolic calcium ion concentration"/>
    <property type="evidence" value="ECO:0000266"/>
    <property type="project" value="RGD"/>
</dbReference>
<dbReference type="GO" id="GO:0045599">
    <property type="term" value="P:negative regulation of fat cell differentiation"/>
    <property type="evidence" value="ECO:0000266"/>
    <property type="project" value="RGD"/>
</dbReference>
<dbReference type="GO" id="GO:0010629">
    <property type="term" value="P:negative regulation of gene expression"/>
    <property type="evidence" value="ECO:0000266"/>
    <property type="project" value="RGD"/>
</dbReference>
<dbReference type="GO" id="GO:0050728">
    <property type="term" value="P:negative regulation of inflammatory response"/>
    <property type="evidence" value="ECO:0000266"/>
    <property type="project" value="RGD"/>
</dbReference>
<dbReference type="GO" id="GO:0061767">
    <property type="term" value="P:negative regulation of lung blood pressure"/>
    <property type="evidence" value="ECO:0000316"/>
    <property type="project" value="BHF-UCL"/>
</dbReference>
<dbReference type="GO" id="GO:1902894">
    <property type="term" value="P:negative regulation of miRNA transcription"/>
    <property type="evidence" value="ECO:0000266"/>
    <property type="project" value="RGD"/>
</dbReference>
<dbReference type="GO" id="GO:0030279">
    <property type="term" value="P:negative regulation of ossification"/>
    <property type="evidence" value="ECO:0000266"/>
    <property type="project" value="RGD"/>
</dbReference>
<dbReference type="GO" id="GO:0045668">
    <property type="term" value="P:negative regulation of osteoblast differentiation"/>
    <property type="evidence" value="ECO:0000266"/>
    <property type="project" value="RGD"/>
</dbReference>
<dbReference type="GO" id="GO:0033689">
    <property type="term" value="P:negative regulation of osteoblast proliferation"/>
    <property type="evidence" value="ECO:0000266"/>
    <property type="project" value="RGD"/>
</dbReference>
<dbReference type="GO" id="GO:0042177">
    <property type="term" value="P:negative regulation of protein catabolic process"/>
    <property type="evidence" value="ECO:0000314"/>
    <property type="project" value="CACAO"/>
</dbReference>
<dbReference type="GO" id="GO:0000122">
    <property type="term" value="P:negative regulation of transcription by RNA polymerase II"/>
    <property type="evidence" value="ECO:0000315"/>
    <property type="project" value="RGD"/>
</dbReference>
<dbReference type="GO" id="GO:0061045">
    <property type="term" value="P:negative regulation of wound healing"/>
    <property type="evidence" value="ECO:0000266"/>
    <property type="project" value="RGD"/>
</dbReference>
<dbReference type="GO" id="GO:0038092">
    <property type="term" value="P:nodal signaling pathway"/>
    <property type="evidence" value="ECO:0000266"/>
    <property type="project" value="RGD"/>
</dbReference>
<dbReference type="GO" id="GO:0002076">
    <property type="term" value="P:osteoblast development"/>
    <property type="evidence" value="ECO:0000266"/>
    <property type="project" value="RGD"/>
</dbReference>
<dbReference type="GO" id="GO:0001649">
    <property type="term" value="P:osteoblast differentiation"/>
    <property type="evidence" value="ECO:0000266"/>
    <property type="project" value="RGD"/>
</dbReference>
<dbReference type="GO" id="GO:0048340">
    <property type="term" value="P:paraxial mesoderm morphogenesis"/>
    <property type="evidence" value="ECO:0000266"/>
    <property type="project" value="RGD"/>
</dbReference>
<dbReference type="GO" id="GO:0060039">
    <property type="term" value="P:pericardium development"/>
    <property type="evidence" value="ECO:0000266"/>
    <property type="project" value="RGD"/>
</dbReference>
<dbReference type="GO" id="GO:0030501">
    <property type="term" value="P:positive regulation of bone mineralization"/>
    <property type="evidence" value="ECO:0000314"/>
    <property type="project" value="RGD"/>
</dbReference>
<dbReference type="GO" id="GO:0090263">
    <property type="term" value="P:positive regulation of canonical Wnt signaling pathway"/>
    <property type="evidence" value="ECO:0000315"/>
    <property type="project" value="BHF-UCL"/>
</dbReference>
<dbReference type="GO" id="GO:0030335">
    <property type="term" value="P:positive regulation of cell migration"/>
    <property type="evidence" value="ECO:0000315"/>
    <property type="project" value="RGD"/>
</dbReference>
<dbReference type="GO" id="GO:0032332">
    <property type="term" value="P:positive regulation of chondrocyte differentiation"/>
    <property type="evidence" value="ECO:0000266"/>
    <property type="project" value="RGD"/>
</dbReference>
<dbReference type="GO" id="GO:0045893">
    <property type="term" value="P:positive regulation of DNA-templated transcription"/>
    <property type="evidence" value="ECO:0000266"/>
    <property type="project" value="RGD"/>
</dbReference>
<dbReference type="GO" id="GO:0010718">
    <property type="term" value="P:positive regulation of epithelial to mesenchymal transition"/>
    <property type="evidence" value="ECO:0000266"/>
    <property type="project" value="RGD"/>
</dbReference>
<dbReference type="GO" id="GO:1901203">
    <property type="term" value="P:positive regulation of extracellular matrix assembly"/>
    <property type="evidence" value="ECO:0000266"/>
    <property type="project" value="RGD"/>
</dbReference>
<dbReference type="GO" id="GO:0051894">
    <property type="term" value="P:positive regulation of focal adhesion assembly"/>
    <property type="evidence" value="ECO:0000314"/>
    <property type="project" value="RGD"/>
</dbReference>
<dbReference type="GO" id="GO:0010628">
    <property type="term" value="P:positive regulation of gene expression"/>
    <property type="evidence" value="ECO:0000266"/>
    <property type="project" value="RGD"/>
</dbReference>
<dbReference type="GO" id="GO:0032731">
    <property type="term" value="P:positive regulation of interleukin-1 beta production"/>
    <property type="evidence" value="ECO:0000315"/>
    <property type="project" value="RGD"/>
</dbReference>
<dbReference type="GO" id="GO:1902895">
    <property type="term" value="P:positive regulation of miRNA transcription"/>
    <property type="evidence" value="ECO:0000266"/>
    <property type="project" value="RGD"/>
</dbReference>
<dbReference type="GO" id="GO:0045429">
    <property type="term" value="P:positive regulation of nitric oxide biosynthetic process"/>
    <property type="evidence" value="ECO:0000316"/>
    <property type="project" value="BHF-UCL"/>
</dbReference>
<dbReference type="GO" id="GO:0050927">
    <property type="term" value="P:positive regulation of positive chemotaxis"/>
    <property type="evidence" value="ECO:0000314"/>
    <property type="project" value="RGD"/>
</dbReference>
<dbReference type="GO" id="GO:0060391">
    <property type="term" value="P:positive regulation of SMAD protein signal transduction"/>
    <property type="evidence" value="ECO:0000266"/>
    <property type="project" value="RGD"/>
</dbReference>
<dbReference type="GO" id="GO:0051496">
    <property type="term" value="P:positive regulation of stress fiber assembly"/>
    <property type="evidence" value="ECO:0000314"/>
    <property type="project" value="RGD"/>
</dbReference>
<dbReference type="GO" id="GO:0045944">
    <property type="term" value="P:positive regulation of transcription by RNA polymerase II"/>
    <property type="evidence" value="ECO:0000314"/>
    <property type="project" value="RGD"/>
</dbReference>
<dbReference type="GO" id="GO:0032916">
    <property type="term" value="P:positive regulation of transforming growth factor beta3 production"/>
    <property type="evidence" value="ECO:0000315"/>
    <property type="project" value="RGD"/>
</dbReference>
<dbReference type="GO" id="GO:0050821">
    <property type="term" value="P:protein stabilization"/>
    <property type="evidence" value="ECO:0000315"/>
    <property type="project" value="BHF-UCL"/>
</dbReference>
<dbReference type="GO" id="GO:0006355">
    <property type="term" value="P:regulation of DNA-templated transcription"/>
    <property type="evidence" value="ECO:0000266"/>
    <property type="project" value="RGD"/>
</dbReference>
<dbReference type="GO" id="GO:0050678">
    <property type="term" value="P:regulation of epithelial cell proliferation"/>
    <property type="evidence" value="ECO:0000266"/>
    <property type="project" value="RGD"/>
</dbReference>
<dbReference type="GO" id="GO:0050776">
    <property type="term" value="P:regulation of immune response"/>
    <property type="evidence" value="ECO:0000266"/>
    <property type="project" value="RGD"/>
</dbReference>
<dbReference type="GO" id="GO:0051881">
    <property type="term" value="P:regulation of mitochondrial membrane potential"/>
    <property type="evidence" value="ECO:0000315"/>
    <property type="project" value="RGD"/>
</dbReference>
<dbReference type="GO" id="GO:0016202">
    <property type="term" value="P:regulation of striated muscle tissue development"/>
    <property type="evidence" value="ECO:0000266"/>
    <property type="project" value="RGD"/>
</dbReference>
<dbReference type="GO" id="GO:0006357">
    <property type="term" value="P:regulation of transcription by RNA polymerase II"/>
    <property type="evidence" value="ECO:0000266"/>
    <property type="project" value="RGD"/>
</dbReference>
<dbReference type="GO" id="GO:0017015">
    <property type="term" value="P:regulation of transforming growth factor beta receptor signaling pathway"/>
    <property type="evidence" value="ECO:0000266"/>
    <property type="project" value="RGD"/>
</dbReference>
<dbReference type="GO" id="GO:0032909">
    <property type="term" value="P:regulation of transforming growth factor beta2 production"/>
    <property type="evidence" value="ECO:0000266"/>
    <property type="project" value="RGD"/>
</dbReference>
<dbReference type="GO" id="GO:0001836">
    <property type="term" value="P:release of cytochrome c from mitochondria"/>
    <property type="evidence" value="ECO:0000315"/>
    <property type="project" value="RGD"/>
</dbReference>
<dbReference type="GO" id="GO:1990776">
    <property type="term" value="P:response to angiotensin"/>
    <property type="evidence" value="ECO:0000266"/>
    <property type="project" value="RGD"/>
</dbReference>
<dbReference type="GO" id="GO:0001666">
    <property type="term" value="P:response to hypoxia"/>
    <property type="evidence" value="ECO:0000266"/>
    <property type="project" value="RGD"/>
</dbReference>
<dbReference type="GO" id="GO:0071559">
    <property type="term" value="P:response to transforming growth factor beta"/>
    <property type="evidence" value="ECO:0000266"/>
    <property type="project" value="RGD"/>
</dbReference>
<dbReference type="GO" id="GO:0023019">
    <property type="term" value="P:signal transduction involved in regulation of gene expression"/>
    <property type="evidence" value="ECO:0000315"/>
    <property type="project" value="BHF-UCL"/>
</dbReference>
<dbReference type="GO" id="GO:0001501">
    <property type="term" value="P:skeletal system development"/>
    <property type="evidence" value="ECO:0000266"/>
    <property type="project" value="RGD"/>
</dbReference>
<dbReference type="GO" id="GO:0060395">
    <property type="term" value="P:SMAD protein signal transduction"/>
    <property type="evidence" value="ECO:0000315"/>
    <property type="project" value="BHF-UCL"/>
</dbReference>
<dbReference type="GO" id="GO:0001756">
    <property type="term" value="P:somitogenesis"/>
    <property type="evidence" value="ECO:0000266"/>
    <property type="project" value="RGD"/>
</dbReference>
<dbReference type="GO" id="GO:0042110">
    <property type="term" value="P:T cell activation"/>
    <property type="evidence" value="ECO:0000266"/>
    <property type="project" value="RGD"/>
</dbReference>
<dbReference type="GO" id="GO:0030878">
    <property type="term" value="P:thyroid gland development"/>
    <property type="evidence" value="ECO:0000266"/>
    <property type="project" value="RGD"/>
</dbReference>
<dbReference type="GO" id="GO:0060290">
    <property type="term" value="P:transdifferentiation"/>
    <property type="evidence" value="ECO:0000314"/>
    <property type="project" value="RGD"/>
</dbReference>
<dbReference type="GO" id="GO:0007179">
    <property type="term" value="P:transforming growth factor beta receptor signaling pathway"/>
    <property type="evidence" value="ECO:0000315"/>
    <property type="project" value="BHF-UCL"/>
</dbReference>
<dbReference type="GO" id="GO:0061450">
    <property type="term" value="P:trophoblast cell migration"/>
    <property type="evidence" value="ECO:0000266"/>
    <property type="project" value="RGD"/>
</dbReference>
<dbReference type="GO" id="GO:0001657">
    <property type="term" value="P:ureteric bud development"/>
    <property type="evidence" value="ECO:0000266"/>
    <property type="project" value="RGD"/>
</dbReference>
<dbReference type="CDD" id="cd10491">
    <property type="entry name" value="MH1_SMAD_2_3"/>
    <property type="match status" value="1"/>
</dbReference>
<dbReference type="CDD" id="cd10985">
    <property type="entry name" value="MH2_SMAD_2_3"/>
    <property type="match status" value="1"/>
</dbReference>
<dbReference type="FunFam" id="2.60.200.10:FF:000001">
    <property type="entry name" value="Mothers against decapentaplegic homolog"/>
    <property type="match status" value="1"/>
</dbReference>
<dbReference type="FunFam" id="3.90.520.10:FF:000001">
    <property type="entry name" value="Mothers against decapentaplegic homolog"/>
    <property type="match status" value="1"/>
</dbReference>
<dbReference type="Gene3D" id="2.60.200.10">
    <property type="match status" value="1"/>
</dbReference>
<dbReference type="Gene3D" id="3.90.520.10">
    <property type="entry name" value="SMAD MH1 domain"/>
    <property type="match status" value="1"/>
</dbReference>
<dbReference type="InterPro" id="IPR013790">
    <property type="entry name" value="Dwarfin"/>
</dbReference>
<dbReference type="InterPro" id="IPR003619">
    <property type="entry name" value="MAD_homology1_Dwarfin-type"/>
</dbReference>
<dbReference type="InterPro" id="IPR013019">
    <property type="entry name" value="MAD_homology_MH1"/>
</dbReference>
<dbReference type="InterPro" id="IPR017855">
    <property type="entry name" value="SMAD-like_dom_sf"/>
</dbReference>
<dbReference type="InterPro" id="IPR001132">
    <property type="entry name" value="SMAD_dom_Dwarfin-type"/>
</dbReference>
<dbReference type="InterPro" id="IPR008984">
    <property type="entry name" value="SMAD_FHA_dom_sf"/>
</dbReference>
<dbReference type="InterPro" id="IPR036578">
    <property type="entry name" value="SMAD_MH1_sf"/>
</dbReference>
<dbReference type="PANTHER" id="PTHR13703:SF53">
    <property type="entry name" value="MOTHERS AGAINST DECAPENTAPLEGIC HOMOLOG 3"/>
    <property type="match status" value="1"/>
</dbReference>
<dbReference type="PANTHER" id="PTHR13703">
    <property type="entry name" value="SMAD"/>
    <property type="match status" value="1"/>
</dbReference>
<dbReference type="Pfam" id="PF03165">
    <property type="entry name" value="MH1"/>
    <property type="match status" value="1"/>
</dbReference>
<dbReference type="Pfam" id="PF03166">
    <property type="entry name" value="MH2"/>
    <property type="match status" value="1"/>
</dbReference>
<dbReference type="SMART" id="SM00523">
    <property type="entry name" value="DWA"/>
    <property type="match status" value="1"/>
</dbReference>
<dbReference type="SMART" id="SM00524">
    <property type="entry name" value="DWB"/>
    <property type="match status" value="1"/>
</dbReference>
<dbReference type="SUPFAM" id="SSF56366">
    <property type="entry name" value="SMAD MH1 domain"/>
    <property type="match status" value="1"/>
</dbReference>
<dbReference type="SUPFAM" id="SSF49879">
    <property type="entry name" value="SMAD/FHA domain"/>
    <property type="match status" value="1"/>
</dbReference>
<dbReference type="PROSITE" id="PS51075">
    <property type="entry name" value="MH1"/>
    <property type="match status" value="1"/>
</dbReference>
<dbReference type="PROSITE" id="PS51076">
    <property type="entry name" value="MH2"/>
    <property type="match status" value="1"/>
</dbReference>
<evidence type="ECO:0000250" key="1"/>
<evidence type="ECO:0000250" key="2">
    <source>
        <dbReference type="UniProtKB" id="P84022"/>
    </source>
</evidence>
<evidence type="ECO:0000250" key="3">
    <source>
        <dbReference type="UniProtKB" id="Q8BUN5"/>
    </source>
</evidence>
<evidence type="ECO:0000255" key="4">
    <source>
        <dbReference type="PROSITE-ProRule" id="PRU00438"/>
    </source>
</evidence>
<evidence type="ECO:0000255" key="5">
    <source>
        <dbReference type="PROSITE-ProRule" id="PRU00439"/>
    </source>
</evidence>
<evidence type="ECO:0000256" key="6">
    <source>
        <dbReference type="SAM" id="MobiDB-lite"/>
    </source>
</evidence>
<evidence type="ECO:0000269" key="7">
    <source>
    </source>
</evidence>
<evidence type="ECO:0000269" key="8">
    <source>
    </source>
</evidence>
<evidence type="ECO:0000269" key="9">
    <source>
    </source>
</evidence>
<evidence type="ECO:0000269" key="10">
    <source>
    </source>
</evidence>
<evidence type="ECO:0000305" key="11"/>
<proteinExistence type="evidence at protein level"/>
<keyword id="KW-0007">Acetylation</keyword>
<keyword id="KW-0013">ADP-ribosylation</keyword>
<keyword id="KW-0963">Cytoplasm</keyword>
<keyword id="KW-1017">Isopeptide bond</keyword>
<keyword id="KW-0479">Metal-binding</keyword>
<keyword id="KW-0539">Nucleus</keyword>
<keyword id="KW-0597">Phosphoprotein</keyword>
<keyword id="KW-1185">Reference proteome</keyword>
<keyword id="KW-0804">Transcription</keyword>
<keyword id="KW-0805">Transcription regulation</keyword>
<keyword id="KW-0832">Ubl conjugation</keyword>
<keyword id="KW-0862">Zinc</keyword>
<feature type="initiator methionine" description="Removed" evidence="2">
    <location>
        <position position="1"/>
    </location>
</feature>
<feature type="chain" id="PRO_0000090859" description="Mothers against decapentaplegic homolog 3">
    <location>
        <begin position="2"/>
        <end position="425"/>
    </location>
</feature>
<feature type="domain" description="MH1" evidence="4">
    <location>
        <begin position="10"/>
        <end position="136"/>
    </location>
</feature>
<feature type="domain" description="MH2" evidence="5">
    <location>
        <begin position="232"/>
        <end position="425"/>
    </location>
</feature>
<feature type="region of interest" description="Linker">
    <location>
        <begin position="137"/>
        <end position="231"/>
    </location>
</feature>
<feature type="region of interest" description="Disordered" evidence="6">
    <location>
        <begin position="165"/>
        <end position="208"/>
    </location>
</feature>
<feature type="region of interest" description="Sufficient for interaction with XPO4" evidence="1">
    <location>
        <begin position="271"/>
        <end position="324"/>
    </location>
</feature>
<feature type="compositionally biased region" description="Polar residues" evidence="6">
    <location>
        <begin position="165"/>
        <end position="177"/>
    </location>
</feature>
<feature type="binding site" evidence="1">
    <location>
        <position position="64"/>
    </location>
    <ligand>
        <name>Zn(2+)</name>
        <dbReference type="ChEBI" id="CHEBI:29105"/>
    </ligand>
</feature>
<feature type="binding site" evidence="1">
    <location>
        <position position="109"/>
    </location>
    <ligand>
        <name>Zn(2+)</name>
        <dbReference type="ChEBI" id="CHEBI:29105"/>
    </ligand>
</feature>
<feature type="binding site" evidence="1">
    <location>
        <position position="121"/>
    </location>
    <ligand>
        <name>Zn(2+)</name>
        <dbReference type="ChEBI" id="CHEBI:29105"/>
    </ligand>
</feature>
<feature type="binding site" evidence="1">
    <location>
        <position position="126"/>
    </location>
    <ligand>
        <name>Zn(2+)</name>
        <dbReference type="ChEBI" id="CHEBI:29105"/>
    </ligand>
</feature>
<feature type="site" description="Required for trimerization" evidence="1">
    <location>
        <position position="40"/>
    </location>
</feature>
<feature type="site" description="Required for interaction with DNA and JUN and for functional cooperation with JUN" evidence="1">
    <location>
        <position position="41"/>
    </location>
</feature>
<feature type="modified residue" description="N-acetylserine" evidence="2">
    <location>
        <position position="2"/>
    </location>
</feature>
<feature type="modified residue" description="Phosphothreonine; by CDK2 and CDK4" evidence="2">
    <location>
        <position position="8"/>
    </location>
</feature>
<feature type="modified residue" description="Phosphothreonine; by CDK2, CDK4 and MAPK" evidence="2">
    <location>
        <position position="179"/>
    </location>
</feature>
<feature type="modified residue" description="Phosphoserine; by GSK3 and MAPK" evidence="2 5">
    <location>
        <position position="204"/>
    </location>
</feature>
<feature type="modified residue" description="Phosphoserine; by MAPK" evidence="2 5">
    <location>
        <position position="208"/>
    </location>
</feature>
<feature type="modified residue" description="Phosphoserine; by CDK2 and CDK4" evidence="2 5">
    <location>
        <position position="213"/>
    </location>
</feature>
<feature type="modified residue" description="N6-acetyllysine" evidence="2">
    <location>
        <position position="378"/>
    </location>
</feature>
<feature type="modified residue" description="Phosphoserine" evidence="2 5">
    <location>
        <position position="416"/>
    </location>
</feature>
<feature type="modified residue" description="Phosphoserine; by CK1" evidence="2 5">
    <location>
        <position position="418"/>
    </location>
</feature>
<feature type="modified residue" description="Phosphoserine; by TGFBR1" evidence="3 5">
    <location>
        <position position="422"/>
    </location>
</feature>
<feature type="modified residue" description="Phosphoserine; by TGFBR1" evidence="3 5">
    <location>
        <position position="423"/>
    </location>
</feature>
<feature type="modified residue" description="Phosphoserine; by TGFBR1" evidence="3 5">
    <location>
        <position position="425"/>
    </location>
</feature>
<feature type="cross-link" description="Glycyl lysine isopeptide (Lys-Gly) (interchain with G-Cter in ubiquitin)" evidence="2">
    <location>
        <position position="33"/>
    </location>
</feature>
<feature type="cross-link" description="Glycyl lysine isopeptide (Lys-Gly) (interchain with G-Cter in ubiquitin)" evidence="2">
    <location>
        <position position="81"/>
    </location>
</feature>
<reference key="1">
    <citation type="journal article" date="1996" name="Proc. Natl. Acad. Sci. U.S.A.">
        <title>Regulation of transforming growth factor beta- and activin-induced transcription by mammalian Mad proteins.</title>
        <authorList>
            <person name="Chen Y."/>
            <person name="Lebrun J.-J."/>
            <person name="Vale W.W."/>
        </authorList>
    </citation>
    <scope>NUCLEOTIDE SEQUENCE [MRNA]</scope>
    <scope>FUNCTION</scope>
    <scope>SUBCELLULAR LOCATION</scope>
    <scope>TISSUE SPECIFICITY</scope>
    <source>
        <tissue>Brain</tissue>
    </source>
</reference>
<reference key="2">
    <citation type="journal article" date="2004" name="Genome Res.">
        <title>The status, quality, and expansion of the NIH full-length cDNA project: the Mammalian Gene Collection (MGC).</title>
        <authorList>
            <consortium name="The MGC Project Team"/>
        </authorList>
    </citation>
    <scope>NUCLEOTIDE SEQUENCE [LARGE SCALE MRNA]</scope>
    <source>
        <tissue>Prostate</tissue>
    </source>
</reference>
<reference key="3">
    <citation type="journal article" date="2001" name="Proc. Natl. Acad. Sci. U.S.A.">
        <title>Inactivation of menin, a Smad3-interacting protein, blocks transforming growth factor type beta signaling.</title>
        <authorList>
            <person name="Kaji H."/>
            <person name="Canaff L."/>
            <person name="Lebrun J.J."/>
            <person name="Goltzman D."/>
            <person name="Hendy G.N."/>
        </authorList>
    </citation>
    <scope>INTERACTION WITH MEN1</scope>
</reference>
<reference key="4">
    <citation type="journal article" date="2006" name="Oncogene">
        <title>Cited2 modulates TGF-beta-mediated upregulation of MMP9.</title>
        <authorList>
            <person name="Chou Y.T."/>
            <person name="Wang H."/>
            <person name="Chen Y."/>
            <person name="Danielpour D."/>
            <person name="Yang Y.C."/>
        </authorList>
    </citation>
    <scope>INTERACTION WITH CITED2</scope>
</reference>
<reference key="5">
    <citation type="journal article" date="2011" name="Mol. Cell. Biol.">
        <title>TSC-22 promotes transforming growth factor beta-mediated cardiac myofibroblast differentiation by antagonizing Smad7 activity.</title>
        <authorList>
            <person name="Yan X."/>
            <person name="Zhang J."/>
            <person name="Pan L."/>
            <person name="Wang P."/>
            <person name="Xue H."/>
            <person name="Zhang L."/>
            <person name="Gao X."/>
            <person name="Zhao X."/>
            <person name="Ning Y."/>
            <person name="Chen Y.G."/>
        </authorList>
    </citation>
    <scope>TISSUE SPECIFICITY</scope>
</reference>
<organism>
    <name type="scientific">Rattus norvegicus</name>
    <name type="common">Rat</name>
    <dbReference type="NCBI Taxonomy" id="10116"/>
    <lineage>
        <taxon>Eukaryota</taxon>
        <taxon>Metazoa</taxon>
        <taxon>Chordata</taxon>
        <taxon>Craniata</taxon>
        <taxon>Vertebrata</taxon>
        <taxon>Euteleostomi</taxon>
        <taxon>Mammalia</taxon>
        <taxon>Eutheria</taxon>
        <taxon>Euarchontoglires</taxon>
        <taxon>Glires</taxon>
        <taxon>Rodentia</taxon>
        <taxon>Myomorpha</taxon>
        <taxon>Muroidea</taxon>
        <taxon>Muridae</taxon>
        <taxon>Murinae</taxon>
        <taxon>Rattus</taxon>
    </lineage>
</organism>